<accession>Q6PAK3</accession>
<accession>Q7M6Z2</accession>
<evidence type="ECO:0000250" key="1">
    <source>
        <dbReference type="UniProtKB" id="Q63009"/>
    </source>
</evidence>
<evidence type="ECO:0000250" key="2">
    <source>
        <dbReference type="UniProtKB" id="Q9NR22"/>
    </source>
</evidence>
<evidence type="ECO:0000255" key="3">
    <source>
        <dbReference type="PROSITE-ProRule" id="PRU01015"/>
    </source>
</evidence>
<evidence type="ECO:0000256" key="4">
    <source>
        <dbReference type="SAM" id="MobiDB-lite"/>
    </source>
</evidence>
<evidence type="ECO:0000269" key="5">
    <source>
    </source>
</evidence>
<evidence type="ECO:0000305" key="6"/>
<evidence type="ECO:0000312" key="7">
    <source>
        <dbReference type="MGI" id="MGI:3043083"/>
    </source>
</evidence>
<gene>
    <name evidence="7" type="primary">Prmt8</name>
    <name type="synonym">Hrmt1l4</name>
</gene>
<name>ANM8_MOUSE</name>
<dbReference type="EC" id="2.1.1.319" evidence="2"/>
<dbReference type="EMBL" id="AC127373">
    <property type="status" value="NOT_ANNOTATED_CDS"/>
    <property type="molecule type" value="Genomic_DNA"/>
</dbReference>
<dbReference type="EMBL" id="BC060250">
    <property type="protein sequence ID" value="AAH60250.1"/>
    <property type="status" value="ALT_INIT"/>
    <property type="molecule type" value="mRNA"/>
</dbReference>
<dbReference type="EMBL" id="BK001349">
    <property type="protein sequence ID" value="DAA01382.1"/>
    <property type="molecule type" value="mRNA"/>
</dbReference>
<dbReference type="CCDS" id="CCDS57449.1"/>
<dbReference type="RefSeq" id="NP_958759.2">
    <property type="nucleotide sequence ID" value="NM_201371.2"/>
</dbReference>
<dbReference type="SMR" id="Q6PAK3"/>
<dbReference type="BioGRID" id="238106">
    <property type="interactions" value="22"/>
</dbReference>
<dbReference type="FunCoup" id="Q6PAK3">
    <property type="interactions" value="262"/>
</dbReference>
<dbReference type="IntAct" id="Q6PAK3">
    <property type="interactions" value="2"/>
</dbReference>
<dbReference type="MINT" id="Q6PAK3"/>
<dbReference type="STRING" id="10090.ENSMUSP00000032500"/>
<dbReference type="PhosphoSitePlus" id="Q6PAK3"/>
<dbReference type="SwissPalm" id="Q6PAK3"/>
<dbReference type="PaxDb" id="10090-ENSMUSP00000032500"/>
<dbReference type="PeptideAtlas" id="Q6PAK3"/>
<dbReference type="ProteomicsDB" id="296046"/>
<dbReference type="Antibodypedia" id="10506">
    <property type="antibodies" value="175 antibodies from 28 providers"/>
</dbReference>
<dbReference type="DNASU" id="381813"/>
<dbReference type="Ensembl" id="ENSMUST00000032500.9">
    <property type="protein sequence ID" value="ENSMUSP00000032500.9"/>
    <property type="gene ID" value="ENSMUSG00000030350.9"/>
</dbReference>
<dbReference type="GeneID" id="381813"/>
<dbReference type="KEGG" id="mmu:381813"/>
<dbReference type="UCSC" id="uc009dwb.2">
    <property type="organism name" value="mouse"/>
</dbReference>
<dbReference type="AGR" id="MGI:3043083"/>
<dbReference type="CTD" id="56341"/>
<dbReference type="MGI" id="MGI:3043083">
    <property type="gene designation" value="Prmt8"/>
</dbReference>
<dbReference type="VEuPathDB" id="HostDB:ENSMUSG00000030350"/>
<dbReference type="eggNOG" id="KOG1499">
    <property type="taxonomic scope" value="Eukaryota"/>
</dbReference>
<dbReference type="GeneTree" id="ENSGT00940000155867"/>
<dbReference type="HOGENOM" id="CLU_017375_1_1_1"/>
<dbReference type="InParanoid" id="Q6PAK3"/>
<dbReference type="OMA" id="CTHTKVK"/>
<dbReference type="OrthoDB" id="7848332at2759"/>
<dbReference type="PhylomeDB" id="Q6PAK3"/>
<dbReference type="TreeFam" id="TF300608"/>
<dbReference type="BioGRID-ORCS" id="381813">
    <property type="hits" value="1 hit in 83 CRISPR screens"/>
</dbReference>
<dbReference type="CD-CODE" id="CE726F99">
    <property type="entry name" value="Postsynaptic density"/>
</dbReference>
<dbReference type="ChiTaRS" id="Prmt8">
    <property type="organism name" value="mouse"/>
</dbReference>
<dbReference type="PRO" id="PR:Q6PAK3"/>
<dbReference type="Proteomes" id="UP000000589">
    <property type="component" value="Chromosome 6"/>
</dbReference>
<dbReference type="RNAct" id="Q6PAK3">
    <property type="molecule type" value="protein"/>
</dbReference>
<dbReference type="Bgee" id="ENSMUSG00000030350">
    <property type="expression patterns" value="Expressed in piriform cortex and 94 other cell types or tissues"/>
</dbReference>
<dbReference type="GO" id="GO:0009898">
    <property type="term" value="C:cytoplasmic side of plasma membrane"/>
    <property type="evidence" value="ECO:0000250"/>
    <property type="project" value="UniProtKB"/>
</dbReference>
<dbReference type="GO" id="GO:0005886">
    <property type="term" value="C:plasma membrane"/>
    <property type="evidence" value="ECO:0000250"/>
    <property type="project" value="UniProtKB"/>
</dbReference>
<dbReference type="GO" id="GO:0019899">
    <property type="term" value="F:enzyme binding"/>
    <property type="evidence" value="ECO:0000250"/>
    <property type="project" value="HGNC-UCL"/>
</dbReference>
<dbReference type="GO" id="GO:0140939">
    <property type="term" value="F:histone H4 methyltransferase activity"/>
    <property type="evidence" value="ECO:0000250"/>
    <property type="project" value="HGNC-UCL"/>
</dbReference>
<dbReference type="GO" id="GO:0042802">
    <property type="term" value="F:identical protein binding"/>
    <property type="evidence" value="ECO:0000250"/>
    <property type="project" value="UniProtKB"/>
</dbReference>
<dbReference type="GO" id="GO:0042803">
    <property type="term" value="F:protein homodimerization activity"/>
    <property type="evidence" value="ECO:0000250"/>
    <property type="project" value="HGNC-UCL"/>
</dbReference>
<dbReference type="GO" id="GO:0035242">
    <property type="term" value="F:protein-arginine omega-N asymmetric methyltransferase activity"/>
    <property type="evidence" value="ECO:0000250"/>
    <property type="project" value="UniProtKB"/>
</dbReference>
<dbReference type="GO" id="GO:0035241">
    <property type="term" value="F:protein-arginine omega-N monomethyltransferase activity"/>
    <property type="evidence" value="ECO:0000250"/>
    <property type="project" value="HGNC-UCL"/>
</dbReference>
<dbReference type="GO" id="GO:1904047">
    <property type="term" value="F:S-adenosyl-L-methionine binding"/>
    <property type="evidence" value="ECO:0000250"/>
    <property type="project" value="UniProtKB"/>
</dbReference>
<dbReference type="GO" id="GO:0008757">
    <property type="term" value="F:S-adenosylmethionine-dependent methyltransferase activity"/>
    <property type="evidence" value="ECO:0000250"/>
    <property type="project" value="HGNC-UCL"/>
</dbReference>
<dbReference type="GO" id="GO:0051260">
    <property type="term" value="P:protein homooligomerization"/>
    <property type="evidence" value="ECO:0000250"/>
    <property type="project" value="UniProtKB"/>
</dbReference>
<dbReference type="GO" id="GO:0006479">
    <property type="term" value="P:protein methylation"/>
    <property type="evidence" value="ECO:0000250"/>
    <property type="project" value="UniProtKB"/>
</dbReference>
<dbReference type="GO" id="GO:1905274">
    <property type="term" value="P:regulation of modification of postsynaptic actin cytoskeleton"/>
    <property type="evidence" value="ECO:0000314"/>
    <property type="project" value="SynGO"/>
</dbReference>
<dbReference type="CDD" id="cd02440">
    <property type="entry name" value="AdoMet_MTases"/>
    <property type="match status" value="1"/>
</dbReference>
<dbReference type="FunFam" id="2.70.160.11:FF:000001">
    <property type="entry name" value="Blast:Protein arginine N-methyltransferase 1"/>
    <property type="match status" value="1"/>
</dbReference>
<dbReference type="FunFam" id="3.40.50.150:FF:000003">
    <property type="entry name" value="Blast:Protein arginine N-methyltransferase 1"/>
    <property type="match status" value="1"/>
</dbReference>
<dbReference type="Gene3D" id="2.70.160.11">
    <property type="entry name" value="Hnrnp arginine n-methyltransferase1"/>
    <property type="match status" value="1"/>
</dbReference>
<dbReference type="Gene3D" id="3.40.50.150">
    <property type="entry name" value="Vaccinia Virus protein VP39"/>
    <property type="match status" value="1"/>
</dbReference>
<dbReference type="InterPro" id="IPR025799">
    <property type="entry name" value="Arg_MeTrfase"/>
</dbReference>
<dbReference type="InterPro" id="IPR041698">
    <property type="entry name" value="Methyltransf_25"/>
</dbReference>
<dbReference type="InterPro" id="IPR055135">
    <property type="entry name" value="PRMT_dom"/>
</dbReference>
<dbReference type="InterPro" id="IPR029063">
    <property type="entry name" value="SAM-dependent_MTases_sf"/>
</dbReference>
<dbReference type="PANTHER" id="PTHR11006">
    <property type="entry name" value="PROTEIN ARGININE N-METHYLTRANSFERASE"/>
    <property type="match status" value="1"/>
</dbReference>
<dbReference type="PANTHER" id="PTHR11006:SF47">
    <property type="entry name" value="PROTEIN ARGININE N-METHYLTRANSFERASE 8"/>
    <property type="match status" value="1"/>
</dbReference>
<dbReference type="Pfam" id="PF13649">
    <property type="entry name" value="Methyltransf_25"/>
    <property type="match status" value="1"/>
</dbReference>
<dbReference type="Pfam" id="PF22528">
    <property type="entry name" value="PRMT_C"/>
    <property type="match status" value="1"/>
</dbReference>
<dbReference type="SUPFAM" id="SSF53335">
    <property type="entry name" value="S-adenosyl-L-methionine-dependent methyltransferases"/>
    <property type="match status" value="1"/>
</dbReference>
<dbReference type="PROSITE" id="PS51678">
    <property type="entry name" value="SAM_MT_PRMT"/>
    <property type="match status" value="1"/>
</dbReference>
<comment type="function">
    <text evidence="2">S-adenosyl-L-methionine-dependent and membrane-associated arginine methyltransferase that can both catalyze the formation of omega-N monomethylarginine (MMA) and asymmetrical dimethylarginine (aDMA) in proteins such as NIFK, myelin basic protein, histone H4, H2A and H2A/H2B dimer. Able to mono- and dimethylate EWS protein; however its precise role toward EWS remains unclear as it still interacts with fully methylated EWS.</text>
</comment>
<comment type="catalytic activity">
    <reaction evidence="2">
        <text>L-arginyl-[protein] + S-adenosyl-L-methionine = N(omega)-methyl-L-arginyl-[protein] + S-adenosyl-L-homocysteine + H(+)</text>
        <dbReference type="Rhea" id="RHEA:48100"/>
        <dbReference type="Rhea" id="RHEA-COMP:10532"/>
        <dbReference type="Rhea" id="RHEA-COMP:11990"/>
        <dbReference type="ChEBI" id="CHEBI:15378"/>
        <dbReference type="ChEBI" id="CHEBI:29965"/>
        <dbReference type="ChEBI" id="CHEBI:57856"/>
        <dbReference type="ChEBI" id="CHEBI:59789"/>
        <dbReference type="ChEBI" id="CHEBI:65280"/>
    </reaction>
    <physiologicalReaction direction="left-to-right" evidence="2">
        <dbReference type="Rhea" id="RHEA:48101"/>
    </physiologicalReaction>
</comment>
<comment type="catalytic activity">
    <reaction evidence="2">
        <text>L-arginyl-[protein] + 2 S-adenosyl-L-methionine = N(omega),N(omega)-dimethyl-L-arginyl-[protein] + 2 S-adenosyl-L-homocysteine + 2 H(+)</text>
        <dbReference type="Rhea" id="RHEA:48096"/>
        <dbReference type="Rhea" id="RHEA-COMP:10532"/>
        <dbReference type="Rhea" id="RHEA-COMP:11991"/>
        <dbReference type="ChEBI" id="CHEBI:15378"/>
        <dbReference type="ChEBI" id="CHEBI:29965"/>
        <dbReference type="ChEBI" id="CHEBI:57856"/>
        <dbReference type="ChEBI" id="CHEBI:59789"/>
        <dbReference type="ChEBI" id="CHEBI:61897"/>
        <dbReference type="EC" id="2.1.1.319"/>
    </reaction>
    <physiologicalReaction direction="left-to-right" evidence="2">
        <dbReference type="Rhea" id="RHEA:48097"/>
    </physiologicalReaction>
</comment>
<comment type="subunit">
    <text evidence="2">Homodimer. Tetramer; individual homodimers associates to form a homotetramer. Homooctamer; individual homodimers associates to form a homooctamer and homooligomerization is required for proper localization to the cell membrane. Heterodimer with PRMT1; heterodimerization may recruit PRMT1 activity to the plasma membrane. Interacts with PRMT2 (via the SH3 domain). Interacts with FYN (via the SH3 domain). Interacts with EWS; independently of EWS methylation status.</text>
</comment>
<comment type="subcellular location">
    <subcellularLocation>
        <location evidence="2">Cell membrane</location>
        <topology evidence="2">Lipid-anchor</topology>
        <orientation evidence="2">Cytoplasmic side</orientation>
    </subcellularLocation>
</comment>
<comment type="tissue specificity">
    <text evidence="5">Brain-specific. Only expressed in neurons, especially in the somatosensory and limbic systems, and a part of motor system. Highly expressed in all of the regions related to general somatosensory system. Expressed in most of the relay nuclei intervening the special somatosensory system, such as the auditory, visual and vestibular systems. Also present in forebrain limbic areas and thalamic nuclei relevant to limbic areas and in areas related to the motor system, such as the caudate putamen, Purkinje cells, inferior olivary nucleus and cerebellar nuclei.</text>
</comment>
<comment type="domain">
    <text evidence="2">The SH3-binding motifs mediate the interaction with SH3 domain-containing proteins such as PRMT2 and FYN, possibly leading to displace the N-terminal domain and activate the protein.</text>
</comment>
<comment type="domain">
    <text evidence="2">The N-terminal region (1-60) inhibits the arginine N-methyltransferase activity.</text>
</comment>
<comment type="similarity">
    <text evidence="3">Belongs to the class I-like SAM-binding methyltransferase superfamily. Protein arginine N-methyltransferase family. PRMT8 subfamily.</text>
</comment>
<comment type="sequence caution" evidence="6">
    <conflict type="erroneous initiation">
        <sequence resource="EMBL-CDS" id="AAH60250"/>
    </conflict>
</comment>
<proteinExistence type="evidence at protein level"/>
<protein>
    <recommendedName>
        <fullName evidence="6">Protein arginine N-methyltransferase 8</fullName>
        <ecNumber evidence="2">2.1.1.319</ecNumber>
    </recommendedName>
    <alternativeName>
        <fullName>Heterogeneous nuclear ribonucleoprotein methyltransferase-like protein 4</fullName>
    </alternativeName>
</protein>
<reference key="1">
    <citation type="journal article" date="2009" name="PLoS Biol.">
        <title>Lineage-specific biology revealed by a finished genome assembly of the mouse.</title>
        <authorList>
            <person name="Church D.M."/>
            <person name="Goodstadt L."/>
            <person name="Hillier L.W."/>
            <person name="Zody M.C."/>
            <person name="Goldstein S."/>
            <person name="She X."/>
            <person name="Bult C.J."/>
            <person name="Agarwala R."/>
            <person name="Cherry J.L."/>
            <person name="DiCuccio M."/>
            <person name="Hlavina W."/>
            <person name="Kapustin Y."/>
            <person name="Meric P."/>
            <person name="Maglott D."/>
            <person name="Birtle Z."/>
            <person name="Marques A.C."/>
            <person name="Graves T."/>
            <person name="Zhou S."/>
            <person name="Teague B."/>
            <person name="Potamousis K."/>
            <person name="Churas C."/>
            <person name="Place M."/>
            <person name="Herschleb J."/>
            <person name="Runnheim R."/>
            <person name="Forrest D."/>
            <person name="Amos-Landgraf J."/>
            <person name="Schwartz D.C."/>
            <person name="Cheng Z."/>
            <person name="Lindblad-Toh K."/>
            <person name="Eichler E.E."/>
            <person name="Ponting C.P."/>
        </authorList>
    </citation>
    <scope>NUCLEOTIDE SEQUENCE [LARGE SCALE GENOMIC DNA]</scope>
    <source>
        <strain>C57BL/6J</strain>
    </source>
</reference>
<reference key="2">
    <citation type="journal article" date="2004" name="Genome Res.">
        <title>The status, quality, and expansion of the NIH full-length cDNA project: the Mammalian Gene Collection (MGC).</title>
        <authorList>
            <consortium name="The MGC Project Team"/>
        </authorList>
    </citation>
    <scope>NUCLEOTIDE SEQUENCE [LARGE SCALE MRNA] OF 7-394</scope>
    <source>
        <strain>C57BL/6J</strain>
        <tissue>Brain</tissue>
    </source>
</reference>
<reference key="3">
    <citation type="journal article" date="2003" name="Proc. Natl. Acad. Sci. U.S.A.">
        <title>Screening for mammalian neural genes via fluorescence-activated cell sorter purification of neural precursors from Sox1-gfp knock-in mice.</title>
        <authorList>
            <person name="Aubert J."/>
            <person name="Stavridis M.P."/>
            <person name="Tweedie S."/>
            <person name="O'Reilly M."/>
            <person name="Vierlinger K."/>
            <person name="Li M."/>
            <person name="Ghazal P."/>
            <person name="Pratt T."/>
            <person name="Mason J.O."/>
            <person name="Roy D."/>
            <person name="Smith A."/>
        </authorList>
    </citation>
    <scope>IDENTIFICATION</scope>
</reference>
<reference key="4">
    <citation type="journal article" date="2007" name="Brain Res.">
        <title>Specific regional distribution of protein arginine methyltransferase 8 (PRMT8) in the mouse brain.</title>
        <authorList>
            <person name="Taneda T."/>
            <person name="Miyata S."/>
            <person name="Kousaka A."/>
            <person name="Inoue K."/>
            <person name="Koyama Y."/>
            <person name="Mori Y."/>
            <person name="Tohyama M."/>
        </authorList>
    </citation>
    <scope>TISSUE SPECIFICITY</scope>
</reference>
<reference key="5">
    <citation type="journal article" date="2010" name="Cell">
        <title>A tissue-specific atlas of mouse protein phosphorylation and expression.</title>
        <authorList>
            <person name="Huttlin E.L."/>
            <person name="Jedrychowski M.P."/>
            <person name="Elias J.E."/>
            <person name="Goswami T."/>
            <person name="Rad R."/>
            <person name="Beausoleil S.A."/>
            <person name="Villen J."/>
            <person name="Haas W."/>
            <person name="Sowa M.E."/>
            <person name="Gygi S.P."/>
        </authorList>
    </citation>
    <scope>IDENTIFICATION BY MASS SPECTROMETRY [LARGE SCALE ANALYSIS]</scope>
    <source>
        <tissue>Brain</tissue>
    </source>
</reference>
<sequence length="394" mass="45276">MGMKHSSRCLLLRRKMAENAVESTEVSSAPPQPPQPVIPAKPVQCVHHVSTQPSCPGRGKMSKLLNPEEMTSRDYYFDSYAHFGIHEEMLKDEVRTLTYRNSMYHNKHVFKDKVVLDVGSGTGILSMFAAKAGAKKVFGIECSSISDYSEKIIKANHLDNVITIFKGKVEEVELPVEKVDIIISEWMGYCLFYESMLNTVIFARDKWLKPGGLMFPDRAALYVVAIEDRQYKDFKIHWWENVYGFDMTCIRDVAMKEPLVDIVDPKQVVTNACLIKEVDIYTVKTEELSFTSAFCLQIQRNDYVHALVTYFNIEFTKCHKKMGFSTAPDAPYTHWKQTVFYLEDYLTVRRGEEIYGTISMKPNAKNVRDLDFTVDLDFKGQLCETSVSNDYKMR</sequence>
<keyword id="KW-1003">Cell membrane</keyword>
<keyword id="KW-0449">Lipoprotein</keyword>
<keyword id="KW-0472">Membrane</keyword>
<keyword id="KW-0488">Methylation</keyword>
<keyword id="KW-0489">Methyltransferase</keyword>
<keyword id="KW-0519">Myristate</keyword>
<keyword id="KW-1185">Reference proteome</keyword>
<keyword id="KW-0677">Repeat</keyword>
<keyword id="KW-0949">S-adenosyl-L-methionine</keyword>
<keyword id="KW-0808">Transferase</keyword>
<feature type="initiator methionine" description="Removed" evidence="2">
    <location>
        <position position="1"/>
    </location>
</feature>
<feature type="chain" id="PRO_0000212330" description="Protein arginine N-methyltransferase 8">
    <location>
        <begin position="2"/>
        <end position="394"/>
    </location>
</feature>
<feature type="domain" description="SAM-dependent MTase PRMT-type" evidence="3">
    <location>
        <begin position="73"/>
        <end position="394"/>
    </location>
</feature>
<feature type="region of interest" description="Disordered" evidence="4">
    <location>
        <begin position="21"/>
        <end position="40"/>
    </location>
</feature>
<feature type="short sequence motif" description="SH3-binding 1" evidence="2">
    <location>
        <begin position="29"/>
        <end position="42"/>
    </location>
</feature>
<feature type="short sequence motif" description="SH3-binding 2" evidence="2">
    <location>
        <begin position="53"/>
        <end position="58"/>
    </location>
</feature>
<feature type="compositionally biased region" description="Pro residues" evidence="4">
    <location>
        <begin position="30"/>
        <end position="39"/>
    </location>
</feature>
<feature type="active site" evidence="1">
    <location>
        <position position="185"/>
    </location>
</feature>
<feature type="active site" evidence="1">
    <location>
        <position position="194"/>
    </location>
</feature>
<feature type="binding site" evidence="1">
    <location>
        <position position="86"/>
    </location>
    <ligand>
        <name>S-adenosyl-L-methionine</name>
        <dbReference type="ChEBI" id="CHEBI:59789"/>
    </ligand>
</feature>
<feature type="binding site" evidence="2">
    <location>
        <position position="95"/>
    </location>
    <ligand>
        <name>S-adenosyl-L-methionine</name>
        <dbReference type="ChEBI" id="CHEBI:59789"/>
    </ligand>
</feature>
<feature type="binding site" evidence="2">
    <location>
        <begin position="119"/>
        <end position="122"/>
    </location>
    <ligand>
        <name>S-adenosyl-L-methionine</name>
        <dbReference type="ChEBI" id="CHEBI:59789"/>
    </ligand>
</feature>
<feature type="binding site" evidence="2">
    <location>
        <position position="119"/>
    </location>
    <ligand>
        <name>S-adenosyl-L-methionine</name>
        <dbReference type="ChEBI" id="CHEBI:59789"/>
    </ligand>
</feature>
<feature type="binding site" evidence="2">
    <location>
        <position position="141"/>
    </location>
    <ligand>
        <name>S-adenosyl-L-methionine</name>
        <dbReference type="ChEBI" id="CHEBI:59789"/>
    </ligand>
</feature>
<feature type="binding site" evidence="2">
    <location>
        <position position="170"/>
    </location>
    <ligand>
        <name>S-adenosyl-L-methionine</name>
        <dbReference type="ChEBI" id="CHEBI:59789"/>
    </ligand>
</feature>
<feature type="modified residue" description="Omega-N-methylarginine; by PRMT8" evidence="2">
    <location>
        <position position="58"/>
    </location>
</feature>
<feature type="modified residue" description="Asymmetric dimethylarginine; by PRMT8" evidence="2">
    <location>
        <position position="73"/>
    </location>
</feature>
<feature type="lipid moiety-binding region" description="N-myristoyl glycine" evidence="2">
    <location>
        <position position="2"/>
    </location>
</feature>
<organism>
    <name type="scientific">Mus musculus</name>
    <name type="common">Mouse</name>
    <dbReference type="NCBI Taxonomy" id="10090"/>
    <lineage>
        <taxon>Eukaryota</taxon>
        <taxon>Metazoa</taxon>
        <taxon>Chordata</taxon>
        <taxon>Craniata</taxon>
        <taxon>Vertebrata</taxon>
        <taxon>Euteleostomi</taxon>
        <taxon>Mammalia</taxon>
        <taxon>Eutheria</taxon>
        <taxon>Euarchontoglires</taxon>
        <taxon>Glires</taxon>
        <taxon>Rodentia</taxon>
        <taxon>Myomorpha</taxon>
        <taxon>Muroidea</taxon>
        <taxon>Muridae</taxon>
        <taxon>Murinae</taxon>
        <taxon>Mus</taxon>
        <taxon>Mus</taxon>
    </lineage>
</organism>